<feature type="transit peptide" description="Mitochondrion" evidence="1">
    <location>
        <begin position="1"/>
        <end position="51"/>
    </location>
</feature>
<feature type="chain" id="PRO_0000402898" description="Translation factor guf1, mitochondrial">
    <location>
        <begin position="52"/>
        <end position="663"/>
    </location>
</feature>
<feature type="domain" description="tr-type G">
    <location>
        <begin position="65"/>
        <end position="245"/>
    </location>
</feature>
<feature type="binding site" evidence="1">
    <location>
        <begin position="74"/>
        <end position="81"/>
    </location>
    <ligand>
        <name>GTP</name>
        <dbReference type="ChEBI" id="CHEBI:37565"/>
    </ligand>
</feature>
<feature type="binding site" evidence="1">
    <location>
        <begin position="138"/>
        <end position="142"/>
    </location>
    <ligand>
        <name>GTP</name>
        <dbReference type="ChEBI" id="CHEBI:37565"/>
    </ligand>
</feature>
<feature type="binding site" evidence="1">
    <location>
        <begin position="192"/>
        <end position="195"/>
    </location>
    <ligand>
        <name>GTP</name>
        <dbReference type="ChEBI" id="CHEBI:37565"/>
    </ligand>
</feature>
<name>GUF1_TALMQ</name>
<dbReference type="EC" id="3.6.5.-"/>
<dbReference type="EMBL" id="DS995906">
    <property type="protein sequence ID" value="EEA19182.1"/>
    <property type="molecule type" value="Genomic_DNA"/>
</dbReference>
<dbReference type="RefSeq" id="XP_002153567.1">
    <property type="nucleotide sequence ID" value="XM_002153531.1"/>
</dbReference>
<dbReference type="SMR" id="B6QW35"/>
<dbReference type="STRING" id="441960.B6QW35"/>
<dbReference type="VEuPathDB" id="FungiDB:PMAA_014420"/>
<dbReference type="HOGENOM" id="CLU_009995_3_1_1"/>
<dbReference type="OrthoDB" id="1369at28568"/>
<dbReference type="PhylomeDB" id="B6QW35"/>
<dbReference type="Proteomes" id="UP000001294">
    <property type="component" value="Unassembled WGS sequence"/>
</dbReference>
<dbReference type="GO" id="GO:0005743">
    <property type="term" value="C:mitochondrial inner membrane"/>
    <property type="evidence" value="ECO:0007669"/>
    <property type="project" value="UniProtKB-SubCell"/>
</dbReference>
<dbReference type="GO" id="GO:0005759">
    <property type="term" value="C:mitochondrial matrix"/>
    <property type="evidence" value="ECO:0007669"/>
    <property type="project" value="UniProtKB-UniRule"/>
</dbReference>
<dbReference type="GO" id="GO:0005525">
    <property type="term" value="F:GTP binding"/>
    <property type="evidence" value="ECO:0007669"/>
    <property type="project" value="UniProtKB-UniRule"/>
</dbReference>
<dbReference type="GO" id="GO:0003924">
    <property type="term" value="F:GTPase activity"/>
    <property type="evidence" value="ECO:0007669"/>
    <property type="project" value="UniProtKB-UniRule"/>
</dbReference>
<dbReference type="GO" id="GO:0097177">
    <property type="term" value="F:mitochondrial ribosome binding"/>
    <property type="evidence" value="ECO:0007669"/>
    <property type="project" value="TreeGrafter"/>
</dbReference>
<dbReference type="GO" id="GO:0045727">
    <property type="term" value="P:positive regulation of translation"/>
    <property type="evidence" value="ECO:0007669"/>
    <property type="project" value="UniProtKB-UniRule"/>
</dbReference>
<dbReference type="GO" id="GO:0006412">
    <property type="term" value="P:translation"/>
    <property type="evidence" value="ECO:0007669"/>
    <property type="project" value="UniProtKB-KW"/>
</dbReference>
<dbReference type="CDD" id="cd03699">
    <property type="entry name" value="EF4_II"/>
    <property type="match status" value="1"/>
</dbReference>
<dbReference type="CDD" id="cd01890">
    <property type="entry name" value="LepA"/>
    <property type="match status" value="1"/>
</dbReference>
<dbReference type="CDD" id="cd03709">
    <property type="entry name" value="lepA_C"/>
    <property type="match status" value="1"/>
</dbReference>
<dbReference type="FunFam" id="3.40.50.300:FF:000078">
    <property type="entry name" value="Elongation factor 4"/>
    <property type="match status" value="1"/>
</dbReference>
<dbReference type="FunFam" id="2.40.30.10:FF:000015">
    <property type="entry name" value="Translation factor GUF1, mitochondrial"/>
    <property type="match status" value="1"/>
</dbReference>
<dbReference type="FunFam" id="3.30.70.240:FF:000007">
    <property type="entry name" value="Translation factor GUF1, mitochondrial"/>
    <property type="match status" value="1"/>
</dbReference>
<dbReference type="FunFam" id="3.30.70.2570:FF:000001">
    <property type="entry name" value="Translation factor GUF1, mitochondrial"/>
    <property type="match status" value="1"/>
</dbReference>
<dbReference type="FunFam" id="3.30.70.870:FF:000004">
    <property type="entry name" value="Translation factor GUF1, mitochondrial"/>
    <property type="match status" value="1"/>
</dbReference>
<dbReference type="Gene3D" id="3.30.70.240">
    <property type="match status" value="1"/>
</dbReference>
<dbReference type="Gene3D" id="3.30.70.2570">
    <property type="entry name" value="Elongation factor 4, C-terminal domain"/>
    <property type="match status" value="1"/>
</dbReference>
<dbReference type="Gene3D" id="3.30.70.870">
    <property type="entry name" value="Elongation Factor G (Translational Gtpase), domain 3"/>
    <property type="match status" value="1"/>
</dbReference>
<dbReference type="Gene3D" id="3.40.50.300">
    <property type="entry name" value="P-loop containing nucleotide triphosphate hydrolases"/>
    <property type="match status" value="1"/>
</dbReference>
<dbReference type="Gene3D" id="2.40.30.10">
    <property type="entry name" value="Translation factors"/>
    <property type="match status" value="1"/>
</dbReference>
<dbReference type="HAMAP" id="MF_00071">
    <property type="entry name" value="LepA"/>
    <property type="match status" value="1"/>
</dbReference>
<dbReference type="InterPro" id="IPR006297">
    <property type="entry name" value="EF-4"/>
</dbReference>
<dbReference type="InterPro" id="IPR035647">
    <property type="entry name" value="EFG_III/V"/>
</dbReference>
<dbReference type="InterPro" id="IPR000640">
    <property type="entry name" value="EFG_V-like"/>
</dbReference>
<dbReference type="InterPro" id="IPR004161">
    <property type="entry name" value="EFTu-like_2"/>
</dbReference>
<dbReference type="InterPro" id="IPR031157">
    <property type="entry name" value="G_TR_CS"/>
</dbReference>
<dbReference type="InterPro" id="IPR038363">
    <property type="entry name" value="LepA_C_sf"/>
</dbReference>
<dbReference type="InterPro" id="IPR013842">
    <property type="entry name" value="LepA_CTD"/>
</dbReference>
<dbReference type="InterPro" id="IPR035654">
    <property type="entry name" value="LepA_IV"/>
</dbReference>
<dbReference type="InterPro" id="IPR027417">
    <property type="entry name" value="P-loop_NTPase"/>
</dbReference>
<dbReference type="InterPro" id="IPR005225">
    <property type="entry name" value="Small_GTP-bd"/>
</dbReference>
<dbReference type="InterPro" id="IPR000795">
    <property type="entry name" value="T_Tr_GTP-bd_dom"/>
</dbReference>
<dbReference type="InterPro" id="IPR009000">
    <property type="entry name" value="Transl_B-barrel_sf"/>
</dbReference>
<dbReference type="NCBIfam" id="TIGR01393">
    <property type="entry name" value="lepA"/>
    <property type="match status" value="1"/>
</dbReference>
<dbReference type="NCBIfam" id="TIGR00231">
    <property type="entry name" value="small_GTP"/>
    <property type="match status" value="1"/>
</dbReference>
<dbReference type="PANTHER" id="PTHR43512:SF7">
    <property type="entry name" value="TRANSLATION FACTOR GUF1, MITOCHONDRIAL"/>
    <property type="match status" value="1"/>
</dbReference>
<dbReference type="PANTHER" id="PTHR43512">
    <property type="entry name" value="TRANSLATION FACTOR GUF1-RELATED"/>
    <property type="match status" value="1"/>
</dbReference>
<dbReference type="Pfam" id="PF00679">
    <property type="entry name" value="EFG_C"/>
    <property type="match status" value="1"/>
</dbReference>
<dbReference type="Pfam" id="PF00009">
    <property type="entry name" value="GTP_EFTU"/>
    <property type="match status" value="1"/>
</dbReference>
<dbReference type="Pfam" id="PF03144">
    <property type="entry name" value="GTP_EFTU_D2"/>
    <property type="match status" value="1"/>
</dbReference>
<dbReference type="Pfam" id="PF06421">
    <property type="entry name" value="LepA_C"/>
    <property type="match status" value="1"/>
</dbReference>
<dbReference type="PRINTS" id="PR00315">
    <property type="entry name" value="ELONGATNFCT"/>
</dbReference>
<dbReference type="SUPFAM" id="SSF54980">
    <property type="entry name" value="EF-G C-terminal domain-like"/>
    <property type="match status" value="2"/>
</dbReference>
<dbReference type="SUPFAM" id="SSF52540">
    <property type="entry name" value="P-loop containing nucleoside triphosphate hydrolases"/>
    <property type="match status" value="1"/>
</dbReference>
<dbReference type="SUPFAM" id="SSF50447">
    <property type="entry name" value="Translation proteins"/>
    <property type="match status" value="1"/>
</dbReference>
<dbReference type="PROSITE" id="PS00301">
    <property type="entry name" value="G_TR_1"/>
    <property type="match status" value="1"/>
</dbReference>
<dbReference type="PROSITE" id="PS51722">
    <property type="entry name" value="G_TR_2"/>
    <property type="match status" value="1"/>
</dbReference>
<proteinExistence type="inferred from homology"/>
<evidence type="ECO:0000255" key="1">
    <source>
        <dbReference type="HAMAP-Rule" id="MF_03137"/>
    </source>
</evidence>
<evidence type="ECO:0000305" key="2"/>
<protein>
    <recommendedName>
        <fullName evidence="1">Translation factor guf1, mitochondrial</fullName>
        <ecNumber>3.6.5.-</ecNumber>
    </recommendedName>
    <alternativeName>
        <fullName evidence="1">Elongation factor 4 homolog</fullName>
        <shortName evidence="1">EF-4</shortName>
    </alternativeName>
    <alternativeName>
        <fullName evidence="1">GTPase guf1</fullName>
    </alternativeName>
    <alternativeName>
        <fullName evidence="1">Ribosomal back-translocase</fullName>
    </alternativeName>
</protein>
<accession>B6QW35</accession>
<keyword id="KW-0342">GTP-binding</keyword>
<keyword id="KW-0378">Hydrolase</keyword>
<keyword id="KW-0472">Membrane</keyword>
<keyword id="KW-0496">Mitochondrion</keyword>
<keyword id="KW-0999">Mitochondrion inner membrane</keyword>
<keyword id="KW-0547">Nucleotide-binding</keyword>
<keyword id="KW-0648">Protein biosynthesis</keyword>
<keyword id="KW-1185">Reference proteome</keyword>
<keyword id="KW-0809">Transit peptide</keyword>
<organism>
    <name type="scientific">Talaromyces marneffei (strain ATCC 18224 / CBS 334.59 / QM 7333)</name>
    <name type="common">Penicillium marneffei</name>
    <dbReference type="NCBI Taxonomy" id="441960"/>
    <lineage>
        <taxon>Eukaryota</taxon>
        <taxon>Fungi</taxon>
        <taxon>Dikarya</taxon>
        <taxon>Ascomycota</taxon>
        <taxon>Pezizomycotina</taxon>
        <taxon>Eurotiomycetes</taxon>
        <taxon>Eurotiomycetidae</taxon>
        <taxon>Eurotiales</taxon>
        <taxon>Trichocomaceae</taxon>
        <taxon>Talaromyces</taxon>
        <taxon>Talaromyces sect. Talaromyces</taxon>
    </lineage>
</organism>
<comment type="function">
    <text evidence="1">Promotes mitochondrial protein synthesis. May act as a fidelity factor of the translation reaction, by catalyzing a one-codon backward translocation of tRNAs on improperly translocated ribosomes. Binds to mitochondrial ribosomes in a GTP-dependent manner.</text>
</comment>
<comment type="catalytic activity">
    <reaction evidence="1">
        <text>GTP + H2O = GDP + phosphate + H(+)</text>
        <dbReference type="Rhea" id="RHEA:19669"/>
        <dbReference type="ChEBI" id="CHEBI:15377"/>
        <dbReference type="ChEBI" id="CHEBI:15378"/>
        <dbReference type="ChEBI" id="CHEBI:37565"/>
        <dbReference type="ChEBI" id="CHEBI:43474"/>
        <dbReference type="ChEBI" id="CHEBI:58189"/>
    </reaction>
</comment>
<comment type="subcellular location">
    <subcellularLocation>
        <location evidence="1">Mitochondrion inner membrane</location>
        <topology evidence="1">Peripheral membrane protein</topology>
        <orientation evidence="1">Matrix side</orientation>
    </subcellularLocation>
</comment>
<comment type="similarity">
    <text evidence="2">Belongs to the TRAFAC class translation factor GTPase superfamily. Classic translation factor GTPase family. LepA subfamily.</text>
</comment>
<reference key="1">
    <citation type="journal article" date="2015" name="Genome Announc.">
        <title>Genome sequence of the AIDS-associated pathogen Penicillium marneffei (ATCC18224) and its near taxonomic relative Talaromyces stipitatus (ATCC10500).</title>
        <authorList>
            <person name="Nierman W.C."/>
            <person name="Fedorova-Abrams N.D."/>
            <person name="Andrianopoulos A."/>
        </authorList>
    </citation>
    <scope>NUCLEOTIDE SEQUENCE [LARGE SCALE GENOMIC DNA]</scope>
    <source>
        <strain>ATCC 18224 / CBS 334.59 / QM 7333</strain>
    </source>
</reference>
<sequence>MRGCLQVLRWLSTSTARRPVSSRPLHEIFPKSEFRRPFTSTILRQAQASRNVSDLEKRIADIPIERFRNFCIVAHVDHGKSTLSDRLLELTGVIQPGSNKQVLDKLDVERERGITVKAQTCTMLYNHNGEDYLLHLIDTPGHVDFRAEVSRSYASCGGALLLVDASQGVQAQTVANFYLAFAQGLELVPVLNKVDLPSADPERALEQMRSSFELDTDNAIKVSAKTGLNVAQLLPTVIERIPAPVGDHTKPLRMLLVDSWYSTYKGVILLVRVFDGEIRAGDQVVSFATGLKYFVGEVGIMYPDQTPQTTLRAGQVGYIYFNPGMKRSKEAKIGDTFTKVGFEKKVEPLPGFEEPKSMVFVAAYPSDADHFEHLEDSVNQLVLNDRSITVQKESSEALGAGFRLGFLGTLHCSVFEDRLRHEHGASILITPPTVPVKVIYKDGKEVTITNPAHFPDEDDIRAKVAELREPYVMATLTFPDEYLGKVIELCEANRGIQHTLEYFTPTQVILKYELPLGQLVEDFFGKLKGSTKGYATLDYEEAGWKVSNIVKLQLLVNKKSVDAVARIVHYSQAERLGKQWVTKFKEHVDRQMFEIIIQAAVGRKIVARETIKPYRKDVLAKLHAADIGRKRKLLEKQKEGRKRLNAVGNVVIDHSAFQAFLSK</sequence>
<gene>
    <name type="primary">guf1</name>
    <name type="ORF">PMAA_014420</name>
</gene>